<sequence length="1765" mass="201385">MEERYYPVIFPDERNFRPFTFDSLAAIEKRITIQKEKKKSKDKAATEPQPRPQLDLKASRKLPKLYGDVPPDLIAKPLEDLDPFYKDHKTFMVLNKKRTIYRFSAKRALFILGPFNPIRSFMIRISVHSVFSMFIICTVIINCMFMANNSSVDSRPSSNIPEYVFIGIYVLEAVIKILARGFIVDEFSYLRDPWNWLDFIVIGTAIAPCFLGNKVNNLSTLRTFRVLRALKAISVISGLKVIVGALLRSVKKLVDVMVLTLFCLSIFALVGQQLFMGILSQKCIKDDCGPNAFSNKDCFVKENDSEDFIMCGNWLGRRSCPDGSTCNKTTFNPDYNYTNFDSFGWSFLAMFRVMTQDSWEKLYRQILRTSGIYFVFFFVVVIFLGSFYLLNLTLAVVTMAYEEQNRNVAAETEAKEKMFQEAQQLLREEKEALVAMGIDRTSLNSLQASSFSPKKRKFFGSKTRKSFFMRGSKTARASASDSEDDASKNPQLLEQTKRLSQNLPVELFDEHVDPLHRQRALSAVSILTITMQEQEKSQEPCFPCGKNLASKYLVWECSPPWLCIKKVLQTIMTDPFTELAITICIIVNTVFLAMEHHNMDNSLKDILKIGNWVFTGIFIAEMCLKIIALDPYHYFRHGWNIFDSIVALVSLADVLFHKLSKNLSFLASLRVLRVFKLAKSWPTLNTLIKIIGHSVGALGNLTVVLTIVVFIFSVVGMRLFGAKFNKTCSTSPESLRRWHMGDFYHSFLVVFRILCGEWIENMWECMQEMEGSPLCVIVFVLIMVVGKLVVLNLFIALLLNSFSNEEKDGNPEGETRKTKVQLALDRFSRAFYFMARALQNFCCKRCRRQNSPKPNEATESFAGESRDTATLDTRSWKEYDSEMTLYTGQAGAPLAPLAKEEDDMECCGECDASPTSQPSEEAQACDLPLKTKRLPSPDDHGVEMEVFSEEDPNLTIQSARKKSDAASMLSECSTIDLNDIFRNLQKTVSPQKQPDRCFPKGLSCIFLCCKTIKKKSPWVLWWNLRKTCYQIVKHSWFESFIIFVILLSSGALIFEDVNLPSRPQVEKLLKCTDNIFTFIFLLEMILKWVAFGFRKYFTSAWCWLDFLIVVVSGLSLTNLPNLKSFRNLRALRPLRALSQFEGMKVVVNALMSAIPAILNVLLVCLIFWLIFCILGVNFFSGKFGRCINGTDINKYFNASNVPNQSQCLVSNYTWKVPNVNFDNVGNAYLALLQVATYKGWLDIMNAAVDSRGKDEQPAFEANLYAYLYFVVFIIFGSFFTLNLFIGVIIDNFNQQQKKLGGQDIFMTEEQKKYYNAMKKLGTKKPQKPIPRPLNKCQAFVFDLVTSQVFDVIILGLIVTNMIIMMAESEGQPNEVKKIFDILNIVFVVIFTVECLIKVFALRQHYFTNGWNLFDCVVVVLSIISTLVSGLENSNVFPPTLFRIVRLARIGRILRLVRAARGIRTLLFALMMSLPSLFNIGLLLFLVMFIYAIFGMNWFSKVKRGSGIDDIFNFDTFSGSMLCLFQITTSAGWDALLNPMLESKASCNSSSQESCQQPQIAIVYFVSYIIISFLIVVNMYIAVILENFNTATEESEDPLGEDDFEIFYEIWEKFDPEATQFIQYSSLSDFADALPEPLRVAKPNRFQFLMMDLPMVMGDRLHCMDVLFAFTTRVLGNSSGLDTMKAMMEEKFMEANPFKKLYEPIVTTTKRKEEEECAAVIQRAYRRHMEKMIKLKLKGRSSSSLQVFCNGDLSSLDVPKIKVHCD</sequence>
<keyword id="KW-1003">Cell membrane</keyword>
<keyword id="KW-1015">Disulfide bond</keyword>
<keyword id="KW-0325">Glycoprotein</keyword>
<keyword id="KW-0407">Ion channel</keyword>
<keyword id="KW-0406">Ion transport</keyword>
<keyword id="KW-0472">Membrane</keyword>
<keyword id="KW-1185">Reference proteome</keyword>
<keyword id="KW-0677">Repeat</keyword>
<keyword id="KW-0915">Sodium</keyword>
<keyword id="KW-0894">Sodium channel</keyword>
<keyword id="KW-0739">Sodium transport</keyword>
<keyword id="KW-0812">Transmembrane</keyword>
<keyword id="KW-1133">Transmembrane helix</keyword>
<keyword id="KW-0813">Transport</keyword>
<keyword id="KW-0851">Voltage-gated channel</keyword>
<reference key="1">
    <citation type="journal article" date="1999" name="Genomics">
        <title>Coding sequence, genomic organization, and conserved chromosomal localization of the mouse gene Scn11a encoding the sodium channel NaN.</title>
        <authorList>
            <person name="Dib-Hajj S.D."/>
            <person name="Tyrrell L."/>
            <person name="Escayg A."/>
            <person name="Wood P.M."/>
            <person name="Meisler M.H."/>
            <person name="Waxman S.G."/>
        </authorList>
    </citation>
    <scope>NUCLEOTIDE SEQUENCE [MRNA]</scope>
    <source>
        <strain>ICR</strain>
        <tissue>Trigeminal ganglion</tissue>
    </source>
</reference>
<reference key="2">
    <citation type="journal article" date="2000" name="Biochem. Biophys. Res. Commun.">
        <title>Cloning and expression study of the mouse tetrodotoxin-resistant voltage-gated sodium channel alpha subunit NaT/Scn11a.</title>
        <authorList>
            <person name="Ogata K."/>
            <person name="Jeong S.-Y."/>
            <person name="Murakami H."/>
            <person name="Hashida H."/>
            <person name="Suzuki T."/>
            <person name="Masuda N."/>
            <person name="Hirai M."/>
            <person name="Isahara K."/>
            <person name="Uchiyama Y."/>
            <person name="Goto J."/>
            <person name="Kanazawa I."/>
        </authorList>
    </citation>
    <scope>NUCLEOTIDE SEQUENCE [MRNA]</scope>
    <scope>TISSUE SPECIFICITY</scope>
    <scope>DEVELOPMENTAL STAGE</scope>
    <source>
        <tissue>Testis</tissue>
    </source>
</reference>
<reference key="3">
    <citation type="journal article" date="2009" name="PLoS Biol.">
        <title>Lineage-specific biology revealed by a finished genome assembly of the mouse.</title>
        <authorList>
            <person name="Church D.M."/>
            <person name="Goodstadt L."/>
            <person name="Hillier L.W."/>
            <person name="Zody M.C."/>
            <person name="Goldstein S."/>
            <person name="She X."/>
            <person name="Bult C.J."/>
            <person name="Agarwala R."/>
            <person name="Cherry J.L."/>
            <person name="DiCuccio M."/>
            <person name="Hlavina W."/>
            <person name="Kapustin Y."/>
            <person name="Meric P."/>
            <person name="Maglott D."/>
            <person name="Birtle Z."/>
            <person name="Marques A.C."/>
            <person name="Graves T."/>
            <person name="Zhou S."/>
            <person name="Teague B."/>
            <person name="Potamousis K."/>
            <person name="Churas C."/>
            <person name="Place M."/>
            <person name="Herschleb J."/>
            <person name="Runnheim R."/>
            <person name="Forrest D."/>
            <person name="Amos-Landgraf J."/>
            <person name="Schwartz D.C."/>
            <person name="Cheng Z."/>
            <person name="Lindblad-Toh K."/>
            <person name="Eichler E.E."/>
            <person name="Ponting C.P."/>
        </authorList>
    </citation>
    <scope>NUCLEOTIDE SEQUENCE [LARGE SCALE GENOMIC DNA]</scope>
    <source>
        <strain>C57BL/6J</strain>
    </source>
</reference>
<reference key="4">
    <citation type="journal article" date="2003" name="J. Neurosci. Res.">
        <title>Patterned electrical activity modulates sodium channel expression in sensory neurons.</title>
        <authorList>
            <person name="Klein J.P."/>
            <person name="Tendi E.A."/>
            <person name="Dib-Hajj S.D."/>
            <person name="Fields R.D."/>
            <person name="Waxman S.G."/>
        </authorList>
    </citation>
    <scope>INDUCTION</scope>
</reference>
<reference key="5">
    <citation type="journal article" date="2013" name="Nat. Genet.">
        <title>A de novo gain-of-function mutation in SCN11A causes loss of pain perception.</title>
        <authorList>
            <person name="Leipold E."/>
            <person name="Liebmann L."/>
            <person name="Korenke G.C."/>
            <person name="Heinrich T."/>
            <person name="Giesselmann S."/>
            <person name="Baets J."/>
            <person name="Ebbinghaus M."/>
            <person name="Goral R.O."/>
            <person name="Stodberg T."/>
            <person name="Hennings J.C."/>
            <person name="Bergmann M."/>
            <person name="Altmuller J."/>
            <person name="Thiele H."/>
            <person name="Wetzel A."/>
            <person name="Nurnberg P."/>
            <person name="Timmerman V."/>
            <person name="De Jonghe P."/>
            <person name="Blum R."/>
            <person name="Schaible H.G."/>
            <person name="Weis J."/>
            <person name="Heinemann S.H."/>
            <person name="Hubner C.A."/>
            <person name="Kurth I."/>
        </authorList>
    </citation>
    <scope>FUNCTION</scope>
    <scope>TRANSPORTER ACTIVITY</scope>
    <scope>SUBCELLULAR LOCATION</scope>
    <scope>MUTAGENESIS OF LEU-799</scope>
</reference>
<proteinExistence type="evidence at protein level"/>
<dbReference type="EMBL" id="AF118044">
    <property type="protein sequence ID" value="AAD53403.1"/>
    <property type="molecule type" value="mRNA"/>
</dbReference>
<dbReference type="EMBL" id="AB031389">
    <property type="protein sequence ID" value="BAA92154.1"/>
    <property type="molecule type" value="mRNA"/>
</dbReference>
<dbReference type="EMBL" id="AC124662">
    <property type="status" value="NOT_ANNOTATED_CDS"/>
    <property type="molecule type" value="Genomic_DNA"/>
</dbReference>
<dbReference type="EMBL" id="AC162937">
    <property type="status" value="NOT_ANNOTATED_CDS"/>
    <property type="molecule type" value="Genomic_DNA"/>
</dbReference>
<dbReference type="CCDS" id="CCDS40804.1"/>
<dbReference type="RefSeq" id="NP_036017.3">
    <property type="nucleotide sequence ID" value="NM_011887.3"/>
</dbReference>
<dbReference type="SMR" id="Q9R053"/>
<dbReference type="BioGRID" id="204861">
    <property type="interactions" value="12"/>
</dbReference>
<dbReference type="FunCoup" id="Q9R053">
    <property type="interactions" value="12"/>
</dbReference>
<dbReference type="STRING" id="10090.ENSMUSP00000149420"/>
<dbReference type="ChEMBL" id="CHEMBL4523482"/>
<dbReference type="GlyCosmos" id="Q9R053">
    <property type="glycosylation" value="11 sites, No reported glycans"/>
</dbReference>
<dbReference type="GlyGen" id="Q9R053">
    <property type="glycosylation" value="11 sites"/>
</dbReference>
<dbReference type="iPTMnet" id="Q9R053"/>
<dbReference type="PhosphoSitePlus" id="Q9R053"/>
<dbReference type="jPOST" id="Q9R053"/>
<dbReference type="PaxDb" id="10090-ENSMUSP00000065466"/>
<dbReference type="ProteomicsDB" id="253421"/>
<dbReference type="Antibodypedia" id="28814">
    <property type="antibodies" value="120 antibodies from 24 providers"/>
</dbReference>
<dbReference type="DNASU" id="24046"/>
<dbReference type="Ensembl" id="ENSMUST00000070617.8">
    <property type="protein sequence ID" value="ENSMUSP00000065466.8"/>
    <property type="gene ID" value="ENSMUSG00000034115.11"/>
</dbReference>
<dbReference type="Ensembl" id="ENSMUST00000215718.2">
    <property type="protein sequence ID" value="ENSMUSP00000149420.2"/>
    <property type="gene ID" value="ENSMUSG00000034115.11"/>
</dbReference>
<dbReference type="GeneID" id="24046"/>
<dbReference type="KEGG" id="mmu:24046"/>
<dbReference type="UCSC" id="uc009sbk.1">
    <property type="organism name" value="mouse"/>
</dbReference>
<dbReference type="AGR" id="MGI:1345149"/>
<dbReference type="CTD" id="11280"/>
<dbReference type="MGI" id="MGI:1345149">
    <property type="gene designation" value="Scn11a"/>
</dbReference>
<dbReference type="VEuPathDB" id="HostDB:ENSMUSG00000034115"/>
<dbReference type="eggNOG" id="KOG2301">
    <property type="taxonomic scope" value="Eukaryota"/>
</dbReference>
<dbReference type="GeneTree" id="ENSGT00940000161553"/>
<dbReference type="HOGENOM" id="CLU_000540_5_0_1"/>
<dbReference type="InParanoid" id="Q9R053"/>
<dbReference type="OMA" id="VEIDMFP"/>
<dbReference type="OrthoDB" id="2984333at2759"/>
<dbReference type="PhylomeDB" id="Q9R053"/>
<dbReference type="TreeFam" id="TF323985"/>
<dbReference type="BioGRID-ORCS" id="24046">
    <property type="hits" value="0 hits in 80 CRISPR screens"/>
</dbReference>
<dbReference type="PRO" id="PR:Q9R053"/>
<dbReference type="Proteomes" id="UP000000589">
    <property type="component" value="Chromosome 9"/>
</dbReference>
<dbReference type="RNAct" id="Q9R053">
    <property type="molecule type" value="protein"/>
</dbReference>
<dbReference type="Bgee" id="ENSMUSG00000034115">
    <property type="expression patterns" value="Expressed in lumbar dorsal root ganglion and 47 other cell types or tissues"/>
</dbReference>
<dbReference type="GO" id="GO:0030424">
    <property type="term" value="C:axon"/>
    <property type="evidence" value="ECO:0000314"/>
    <property type="project" value="MGI"/>
</dbReference>
<dbReference type="GO" id="GO:0044295">
    <property type="term" value="C:axonal growth cone"/>
    <property type="evidence" value="ECO:0000314"/>
    <property type="project" value="MGI"/>
</dbReference>
<dbReference type="GO" id="GO:0044299">
    <property type="term" value="C:C-fiber"/>
    <property type="evidence" value="ECO:0000314"/>
    <property type="project" value="MGI"/>
</dbReference>
<dbReference type="GO" id="GO:0044297">
    <property type="term" value="C:cell body"/>
    <property type="evidence" value="ECO:0000314"/>
    <property type="project" value="MGI"/>
</dbReference>
<dbReference type="GO" id="GO:0043025">
    <property type="term" value="C:neuronal cell body"/>
    <property type="evidence" value="ECO:0000314"/>
    <property type="project" value="MGI"/>
</dbReference>
<dbReference type="GO" id="GO:0005886">
    <property type="term" value="C:plasma membrane"/>
    <property type="evidence" value="ECO:0000314"/>
    <property type="project" value="MGI"/>
</dbReference>
<dbReference type="GO" id="GO:0001518">
    <property type="term" value="C:voltage-gated sodium channel complex"/>
    <property type="evidence" value="ECO:0007669"/>
    <property type="project" value="InterPro"/>
</dbReference>
<dbReference type="GO" id="GO:0005248">
    <property type="term" value="F:voltage-gated sodium channel activity"/>
    <property type="evidence" value="ECO:0000314"/>
    <property type="project" value="MGI"/>
</dbReference>
<dbReference type="GO" id="GO:0001508">
    <property type="term" value="P:action potential"/>
    <property type="evidence" value="ECO:0000315"/>
    <property type="project" value="MGI"/>
</dbReference>
<dbReference type="GO" id="GO:0099610">
    <property type="term" value="P:action potential initiation"/>
    <property type="evidence" value="ECO:0000315"/>
    <property type="project" value="MGI"/>
</dbReference>
<dbReference type="GO" id="GO:0002526">
    <property type="term" value="P:acute inflammatory response"/>
    <property type="evidence" value="ECO:0000315"/>
    <property type="project" value="MGI"/>
</dbReference>
<dbReference type="GO" id="GO:0060840">
    <property type="term" value="P:artery development"/>
    <property type="evidence" value="ECO:0000315"/>
    <property type="project" value="MGI"/>
</dbReference>
<dbReference type="GO" id="GO:0007409">
    <property type="term" value="P:axonogenesis"/>
    <property type="evidence" value="ECO:0000315"/>
    <property type="project" value="MGI"/>
</dbReference>
<dbReference type="GO" id="GO:0061367">
    <property type="term" value="P:behavioral response to acetic acid induced pain"/>
    <property type="evidence" value="ECO:0000315"/>
    <property type="project" value="MGI"/>
</dbReference>
<dbReference type="GO" id="GO:0061368">
    <property type="term" value="P:behavioral response to formalin induced pain"/>
    <property type="evidence" value="ECO:0000315"/>
    <property type="project" value="MGI"/>
</dbReference>
<dbReference type="GO" id="GO:0048266">
    <property type="term" value="P:behavioral response to pain"/>
    <property type="evidence" value="ECO:0000315"/>
    <property type="project" value="MGI"/>
</dbReference>
<dbReference type="GO" id="GO:1990408">
    <property type="term" value="P:calcitonin gene-related peptide receptor signaling pathway"/>
    <property type="evidence" value="ECO:0000315"/>
    <property type="project" value="MGI"/>
</dbReference>
<dbReference type="GO" id="GO:0070588">
    <property type="term" value="P:calcium ion transmembrane transport"/>
    <property type="evidence" value="ECO:0000315"/>
    <property type="project" value="MGI"/>
</dbReference>
<dbReference type="GO" id="GO:0141156">
    <property type="term" value="P:cAMP/PKA signal transduction"/>
    <property type="evidence" value="ECO:0000315"/>
    <property type="project" value="MGI"/>
</dbReference>
<dbReference type="GO" id="GO:0048870">
    <property type="term" value="P:cell motility"/>
    <property type="evidence" value="ECO:0000315"/>
    <property type="project" value="MGI"/>
</dbReference>
<dbReference type="GO" id="GO:0070417">
    <property type="term" value="P:cellular response to cold"/>
    <property type="evidence" value="ECO:0000315"/>
    <property type="project" value="MGI"/>
</dbReference>
<dbReference type="GO" id="GO:0007635">
    <property type="term" value="P:chemosensory behavior"/>
    <property type="evidence" value="ECO:0000315"/>
    <property type="project" value="MGI"/>
</dbReference>
<dbReference type="GO" id="GO:0002544">
    <property type="term" value="P:chronic inflammatory response"/>
    <property type="evidence" value="ECO:0000315"/>
    <property type="project" value="MGI"/>
</dbReference>
<dbReference type="GO" id="GO:0007623">
    <property type="term" value="P:circadian rhythm"/>
    <property type="evidence" value="ECO:0000315"/>
    <property type="project" value="MGI"/>
</dbReference>
<dbReference type="GO" id="GO:0050974">
    <property type="term" value="P:detection of mechanical stimulus involved in sensory perception"/>
    <property type="evidence" value="ECO:0000315"/>
    <property type="project" value="MGI"/>
</dbReference>
<dbReference type="GO" id="GO:0050966">
    <property type="term" value="P:detection of mechanical stimulus involved in sensory perception of pain"/>
    <property type="evidence" value="ECO:0000315"/>
    <property type="project" value="MGI"/>
</dbReference>
<dbReference type="GO" id="GO:0050965">
    <property type="term" value="P:detection of temperature stimulus involved in sensory perception of pain"/>
    <property type="evidence" value="ECO:0000315"/>
    <property type="project" value="MGI"/>
</dbReference>
<dbReference type="GO" id="GO:0051649">
    <property type="term" value="P:establishment of localization in cell"/>
    <property type="evidence" value="ECO:0000314"/>
    <property type="project" value="MGI"/>
</dbReference>
<dbReference type="GO" id="GO:0007186">
    <property type="term" value="P:G protein-coupled receptor signaling pathway"/>
    <property type="evidence" value="ECO:0000315"/>
    <property type="project" value="MGI"/>
</dbReference>
<dbReference type="GO" id="GO:0006954">
    <property type="term" value="P:inflammatory response"/>
    <property type="evidence" value="ECO:0000315"/>
    <property type="project" value="MGI"/>
</dbReference>
<dbReference type="GO" id="GO:0043303">
    <property type="term" value="P:mast cell degranulation"/>
    <property type="evidence" value="ECO:0000315"/>
    <property type="project" value="MGI"/>
</dbReference>
<dbReference type="GO" id="GO:0086010">
    <property type="term" value="P:membrane depolarization during action potential"/>
    <property type="evidence" value="ECO:0000315"/>
    <property type="project" value="UniProtKB"/>
</dbReference>
<dbReference type="GO" id="GO:0060073">
    <property type="term" value="P:micturition"/>
    <property type="evidence" value="ECO:0000315"/>
    <property type="project" value="MGI"/>
</dbReference>
<dbReference type="GO" id="GO:0019228">
    <property type="term" value="P:neuronal action potential"/>
    <property type="evidence" value="ECO:0000315"/>
    <property type="project" value="MGI"/>
</dbReference>
<dbReference type="GO" id="GO:0060004">
    <property type="term" value="P:reflex"/>
    <property type="evidence" value="ECO:0000315"/>
    <property type="project" value="MGI"/>
</dbReference>
<dbReference type="GO" id="GO:0042391">
    <property type="term" value="P:regulation of membrane potential"/>
    <property type="evidence" value="ECO:0000315"/>
    <property type="project" value="MGI"/>
</dbReference>
<dbReference type="GO" id="GO:0010996">
    <property type="term" value="P:response to auditory stimulus"/>
    <property type="evidence" value="ECO:0000315"/>
    <property type="project" value="MGI"/>
</dbReference>
<dbReference type="GO" id="GO:0009409">
    <property type="term" value="P:response to cold"/>
    <property type="evidence" value="ECO:0000315"/>
    <property type="project" value="MGI"/>
</dbReference>
<dbReference type="GO" id="GO:0009408">
    <property type="term" value="P:response to heat"/>
    <property type="evidence" value="ECO:0000315"/>
    <property type="project" value="MGI"/>
</dbReference>
<dbReference type="GO" id="GO:0009644">
    <property type="term" value="P:response to high light intensity"/>
    <property type="evidence" value="ECO:0000315"/>
    <property type="project" value="MGI"/>
</dbReference>
<dbReference type="GO" id="GO:0071731">
    <property type="term" value="P:response to nitric oxide"/>
    <property type="evidence" value="ECO:0000315"/>
    <property type="project" value="MGI"/>
</dbReference>
<dbReference type="GO" id="GO:0048265">
    <property type="term" value="P:response to pain"/>
    <property type="evidence" value="ECO:0000315"/>
    <property type="project" value="MGI"/>
</dbReference>
<dbReference type="GO" id="GO:0034695">
    <property type="term" value="P:response to prostaglandin E"/>
    <property type="evidence" value="ECO:0000315"/>
    <property type="project" value="MGI"/>
</dbReference>
<dbReference type="GO" id="GO:0009636">
    <property type="term" value="P:response to toxic substance"/>
    <property type="evidence" value="ECO:0000315"/>
    <property type="project" value="MGI"/>
</dbReference>
<dbReference type="GO" id="GO:0009410">
    <property type="term" value="P:response to xenobiotic stimulus"/>
    <property type="evidence" value="ECO:0000315"/>
    <property type="project" value="MGI"/>
</dbReference>
<dbReference type="GO" id="GO:0160025">
    <property type="term" value="P:sensory perception of itch"/>
    <property type="evidence" value="ECO:0000315"/>
    <property type="project" value="MGI"/>
</dbReference>
<dbReference type="GO" id="GO:0019233">
    <property type="term" value="P:sensory perception of pain"/>
    <property type="evidence" value="ECO:0000315"/>
    <property type="project" value="UniProtKB"/>
</dbReference>
<dbReference type="GO" id="GO:0060538">
    <property type="term" value="P:skeletal muscle organ development"/>
    <property type="evidence" value="ECO:0000315"/>
    <property type="project" value="MGI"/>
</dbReference>
<dbReference type="GO" id="GO:1990770">
    <property type="term" value="P:small intestine smooth muscle contraction"/>
    <property type="evidence" value="ECO:0000315"/>
    <property type="project" value="MGI"/>
</dbReference>
<dbReference type="GO" id="GO:0035725">
    <property type="term" value="P:sodium ion transmembrane transport"/>
    <property type="evidence" value="ECO:0000315"/>
    <property type="project" value="MGI"/>
</dbReference>
<dbReference type="GO" id="GO:0006814">
    <property type="term" value="P:sodium ion transport"/>
    <property type="evidence" value="ECO:0000314"/>
    <property type="project" value="MGI"/>
</dbReference>
<dbReference type="GO" id="GO:0040040">
    <property type="term" value="P:thermosensory behavior"/>
    <property type="evidence" value="ECO:0000315"/>
    <property type="project" value="MGI"/>
</dbReference>
<dbReference type="GO" id="GO:0001966">
    <property type="term" value="P:thigmotaxis"/>
    <property type="evidence" value="ECO:0000315"/>
    <property type="project" value="MGI"/>
</dbReference>
<dbReference type="GO" id="GO:0019226">
    <property type="term" value="P:transmission of nerve impulse"/>
    <property type="evidence" value="ECO:0000315"/>
    <property type="project" value="MGI"/>
</dbReference>
<dbReference type="CDD" id="cd13433">
    <property type="entry name" value="Na_channel_gate"/>
    <property type="match status" value="1"/>
</dbReference>
<dbReference type="FunFam" id="1.10.238.10:FF:000002">
    <property type="entry name" value="Sodium channel protein"/>
    <property type="match status" value="1"/>
</dbReference>
<dbReference type="FunFam" id="1.10.287.70:FF:000001">
    <property type="entry name" value="Sodium channel protein"/>
    <property type="match status" value="1"/>
</dbReference>
<dbReference type="FunFam" id="1.10.287.70:FF:000116">
    <property type="entry name" value="Sodium channel protein"/>
    <property type="match status" value="1"/>
</dbReference>
<dbReference type="FunFam" id="1.20.120.350:FF:000002">
    <property type="entry name" value="Sodium channel protein"/>
    <property type="match status" value="1"/>
</dbReference>
<dbReference type="FunFam" id="1.20.120.350:FF:000065">
    <property type="entry name" value="Sodium channel protein"/>
    <property type="match status" value="1"/>
</dbReference>
<dbReference type="FunFam" id="1.20.120.350:FF:000066">
    <property type="entry name" value="Sodium channel protein"/>
    <property type="match status" value="1"/>
</dbReference>
<dbReference type="FunFam" id="1.20.120.350:FF:000075">
    <property type="entry name" value="Sodium channel protein"/>
    <property type="match status" value="1"/>
</dbReference>
<dbReference type="Gene3D" id="1.10.287.70">
    <property type="match status" value="4"/>
</dbReference>
<dbReference type="Gene3D" id="1.10.238.10">
    <property type="entry name" value="EF-hand"/>
    <property type="match status" value="1"/>
</dbReference>
<dbReference type="Gene3D" id="1.20.5.1190">
    <property type="entry name" value="iswi atpase"/>
    <property type="match status" value="1"/>
</dbReference>
<dbReference type="Gene3D" id="1.20.120.350">
    <property type="entry name" value="Voltage-gated potassium channels. Chain C"/>
    <property type="match status" value="4"/>
</dbReference>
<dbReference type="InterPro" id="IPR005821">
    <property type="entry name" value="Ion_trans_dom"/>
</dbReference>
<dbReference type="InterPro" id="IPR001696">
    <property type="entry name" value="Na_channel_asu"/>
</dbReference>
<dbReference type="InterPro" id="IPR044564">
    <property type="entry name" value="Na_chnl_inactivation_gate"/>
</dbReference>
<dbReference type="InterPro" id="IPR010526">
    <property type="entry name" value="Na_trans_assoc_dom"/>
</dbReference>
<dbReference type="InterPro" id="IPR043203">
    <property type="entry name" value="VGCC_Ca_Na"/>
</dbReference>
<dbReference type="InterPro" id="IPR027359">
    <property type="entry name" value="Volt_channel_dom_sf"/>
</dbReference>
<dbReference type="PANTHER" id="PTHR10037:SF210">
    <property type="entry name" value="SODIUM CHANNEL PROTEIN TYPE 11 SUBUNIT ALPHA"/>
    <property type="match status" value="1"/>
</dbReference>
<dbReference type="PANTHER" id="PTHR10037">
    <property type="entry name" value="VOLTAGE-GATED CATION CHANNEL CALCIUM AND SODIUM"/>
    <property type="match status" value="1"/>
</dbReference>
<dbReference type="Pfam" id="PF00520">
    <property type="entry name" value="Ion_trans"/>
    <property type="match status" value="4"/>
</dbReference>
<dbReference type="Pfam" id="PF24609">
    <property type="entry name" value="IQ_SCN5A_C"/>
    <property type="match status" value="1"/>
</dbReference>
<dbReference type="Pfam" id="PF06512">
    <property type="entry name" value="Na_trans_assoc"/>
    <property type="match status" value="1"/>
</dbReference>
<dbReference type="PRINTS" id="PR00170">
    <property type="entry name" value="NACHANNEL"/>
</dbReference>
<dbReference type="SUPFAM" id="SSF81324">
    <property type="entry name" value="Voltage-gated potassium channels"/>
    <property type="match status" value="4"/>
</dbReference>
<feature type="chain" id="PRO_0000048511" description="Sodium channel protein type 11 subunit alpha">
    <location>
        <begin position="1"/>
        <end position="1765"/>
    </location>
</feature>
<feature type="topological domain" description="Cytoplasmic" evidence="11">
    <location>
        <begin position="1"/>
        <end position="126"/>
    </location>
</feature>
<feature type="transmembrane region" description="Helical; Name=S1 of repeat I" evidence="1">
    <location>
        <begin position="127"/>
        <end position="148"/>
    </location>
</feature>
<feature type="topological domain" description="Extracellular" evidence="11">
    <location>
        <begin position="149"/>
        <end position="159"/>
    </location>
</feature>
<feature type="transmembrane region" description="Helical; Name=S2 of repeat I" evidence="1">
    <location>
        <begin position="160"/>
        <end position="179"/>
    </location>
</feature>
<feature type="topological domain" description="Cytoplasmic" evidence="11">
    <location>
        <begin position="180"/>
        <end position="191"/>
    </location>
</feature>
<feature type="transmembrane region" description="Helical; Name=S3 of repeat I" evidence="1">
    <location>
        <begin position="192"/>
        <end position="211"/>
    </location>
</feature>
<feature type="topological domain" description="Extracellular" evidence="11">
    <location>
        <begin position="212"/>
        <end position="219"/>
    </location>
</feature>
<feature type="transmembrane region" description="Helical; Voltage-sensor; Name=S4 of repeat I" evidence="1">
    <location>
        <begin position="220"/>
        <end position="239"/>
    </location>
</feature>
<feature type="topological domain" description="Cytoplasmic" evidence="11">
    <location>
        <begin position="240"/>
        <end position="255"/>
    </location>
</feature>
<feature type="transmembrane region" description="Helical; Name=S5 of repeat I" evidence="1">
    <location>
        <begin position="256"/>
        <end position="269"/>
    </location>
</feature>
<feature type="topological domain" description="Extracellular" evidence="11">
    <location>
        <begin position="270"/>
        <end position="342"/>
    </location>
</feature>
<feature type="intramembrane region" description="Pore-forming" evidence="2">
    <location>
        <begin position="343"/>
        <end position="367"/>
    </location>
</feature>
<feature type="topological domain" description="Extracellular" evidence="11">
    <location>
        <begin position="368"/>
        <end position="374"/>
    </location>
</feature>
<feature type="transmembrane region" description="Helical; Name=S6 of repeat I" evidence="1">
    <location>
        <begin position="375"/>
        <end position="400"/>
    </location>
</feature>
<feature type="topological domain" description="Cytoplasmic" evidence="11">
    <location>
        <begin position="401"/>
        <end position="570"/>
    </location>
</feature>
<feature type="transmembrane region" description="Helical; Name=S1 of repeat II" evidence="1">
    <location>
        <begin position="571"/>
        <end position="594"/>
    </location>
</feature>
<feature type="topological domain" description="Extracellular" evidence="11">
    <location>
        <begin position="595"/>
        <end position="605"/>
    </location>
</feature>
<feature type="transmembrane region" description="Helical; Name=S2 of repeat II" evidence="1">
    <location>
        <begin position="606"/>
        <end position="629"/>
    </location>
</feature>
<feature type="topological domain" description="Cytoplasmic" evidence="11">
    <location>
        <begin position="630"/>
        <end position="637"/>
    </location>
</feature>
<feature type="transmembrane region" description="Helical; Name=S3 of repeat II" evidence="1">
    <location>
        <begin position="638"/>
        <end position="659"/>
    </location>
</feature>
<feature type="topological domain" description="Extracellular" evidence="11">
    <location>
        <begin position="660"/>
        <end position="664"/>
    </location>
</feature>
<feature type="transmembrane region" description="Helical; Voltage-sensor; Name=S4 of repeat II" evidence="1">
    <location>
        <begin position="665"/>
        <end position="684"/>
    </location>
</feature>
<feature type="topological domain" description="Cytoplasmic" evidence="11">
    <location>
        <begin position="685"/>
        <end position="699"/>
    </location>
</feature>
<feature type="transmembrane region" description="Helical; Name=S5 of repeat II" evidence="1">
    <location>
        <begin position="700"/>
        <end position="722"/>
    </location>
</feature>
<feature type="topological domain" description="Extracellular" evidence="11">
    <location>
        <begin position="723"/>
        <end position="742"/>
    </location>
</feature>
<feature type="intramembrane region" description="Pore-forming" evidence="2">
    <location>
        <begin position="743"/>
        <end position="763"/>
    </location>
</feature>
<feature type="topological domain" description="Extracellular" evidence="11">
    <location>
        <begin position="764"/>
        <end position="773"/>
    </location>
</feature>
<feature type="transmembrane region" description="Helical; Name=S6 of repeat II" evidence="1">
    <location>
        <begin position="774"/>
        <end position="799"/>
    </location>
</feature>
<feature type="topological domain" description="Cytoplasmic" evidence="11">
    <location>
        <begin position="800"/>
        <end position="1030"/>
    </location>
</feature>
<feature type="transmembrane region" description="Helical; Name=S1 of repeat III" evidence="1">
    <location>
        <begin position="1031"/>
        <end position="1053"/>
    </location>
</feature>
<feature type="topological domain" description="Extracellular" evidence="11">
    <location>
        <begin position="1054"/>
        <end position="1067"/>
    </location>
</feature>
<feature type="transmembrane region" description="Helical; Name=S2 of repeat III" evidence="1">
    <location>
        <begin position="1068"/>
        <end position="1093"/>
    </location>
</feature>
<feature type="topological domain" description="Cytoplasmic" evidence="11">
    <location>
        <begin position="1094"/>
        <end position="1099"/>
    </location>
</feature>
<feature type="transmembrane region" description="Helical; Name=S3 of repeat III" evidence="1">
    <location>
        <begin position="1100"/>
        <end position="1117"/>
    </location>
</feature>
<feature type="topological domain" description="Extracellular" evidence="11">
    <location>
        <position position="1118"/>
    </location>
</feature>
<feature type="transmembrane region" description="Helical; Voltage-sensor; Name=S4 of repeat III" evidence="1">
    <location>
        <begin position="1119"/>
        <end position="1140"/>
    </location>
</feature>
<feature type="topological domain" description="Cytoplasmic" evidence="11">
    <location>
        <begin position="1141"/>
        <end position="1159"/>
    </location>
</feature>
<feature type="transmembrane region" description="Helical; Name=S5 of repeat III" evidence="1">
    <location>
        <begin position="1160"/>
        <end position="1181"/>
    </location>
</feature>
<feature type="topological domain" description="Extracellular" evidence="11">
    <location>
        <begin position="1182"/>
        <end position="1224"/>
    </location>
</feature>
<feature type="intramembrane region" description="Pore-forming" evidence="2">
    <location>
        <begin position="1225"/>
        <end position="1246"/>
    </location>
</feature>
<feature type="topological domain" description="Extracellular" evidence="11">
    <location>
        <begin position="1247"/>
        <end position="1262"/>
    </location>
</feature>
<feature type="transmembrane region" description="Helical; Name=S6 of repeat III" evidence="1">
    <location>
        <begin position="1263"/>
        <end position="1289"/>
    </location>
</feature>
<feature type="topological domain" description="Cytoplasmic" evidence="11">
    <location>
        <begin position="1290"/>
        <end position="1342"/>
    </location>
</feature>
<feature type="transmembrane region" description="Helical; Name=S1 of repeat IV" evidence="1">
    <location>
        <begin position="1343"/>
        <end position="1366"/>
    </location>
</feature>
<feature type="topological domain" description="Extracellular" evidence="11">
    <location>
        <begin position="1367"/>
        <end position="1377"/>
    </location>
</feature>
<feature type="transmembrane region" description="Helical; Name=S2 of repeat IV" evidence="1">
    <location>
        <begin position="1378"/>
        <end position="1401"/>
    </location>
</feature>
<feature type="topological domain" description="Cytoplasmic" evidence="11">
    <location>
        <begin position="1402"/>
        <end position="1407"/>
    </location>
</feature>
<feature type="transmembrane region" description="Helical; Name=S3 of repeat IV" evidence="1">
    <location>
        <begin position="1408"/>
        <end position="1431"/>
    </location>
</feature>
<feature type="topological domain" description="Extracellular" evidence="11">
    <location>
        <begin position="1432"/>
        <end position="1440"/>
    </location>
</feature>
<feature type="transmembrane region" description="Helical; Voltage-sensor; Name=S4 of repeat IV" evidence="1">
    <location>
        <begin position="1441"/>
        <end position="1463"/>
    </location>
</feature>
<feature type="topological domain" description="Cytoplasmic" evidence="11">
    <location>
        <begin position="1464"/>
        <end position="1478"/>
    </location>
</feature>
<feature type="transmembrane region" description="Helical; Name=S5 of repeat IV" evidence="1">
    <location>
        <begin position="1479"/>
        <end position="1501"/>
    </location>
</feature>
<feature type="topological domain" description="Extracellular" evidence="11">
    <location>
        <begin position="1502"/>
        <end position="1515"/>
    </location>
</feature>
<feature type="intramembrane region" description="Pore-forming" evidence="2">
    <location>
        <begin position="1516"/>
        <end position="1538"/>
    </location>
</feature>
<feature type="topological domain" description="Extracellular" evidence="11">
    <location>
        <begin position="1539"/>
        <end position="1559"/>
    </location>
</feature>
<feature type="transmembrane region" description="Helical; Name=S6 of repeat IV" evidence="1">
    <location>
        <begin position="1560"/>
        <end position="1584"/>
    </location>
</feature>
<feature type="topological domain" description="Cytoplasmic" evidence="11">
    <location>
        <begin position="1585"/>
        <end position="1765"/>
    </location>
</feature>
<feature type="repeat" description="I" evidence="11">
    <location>
        <begin position="115"/>
        <end position="406"/>
    </location>
</feature>
<feature type="repeat" description="II" evidence="11">
    <location>
        <begin position="557"/>
        <end position="821"/>
    </location>
</feature>
<feature type="repeat" description="III" evidence="11">
    <location>
        <begin position="1023"/>
        <end position="1320"/>
    </location>
</feature>
<feature type="repeat" description="IV" evidence="11">
    <location>
        <begin position="1329"/>
        <end position="1619"/>
    </location>
</feature>
<feature type="region of interest" description="Disordered" evidence="6">
    <location>
        <begin position="470"/>
        <end position="490"/>
    </location>
</feature>
<feature type="region of interest" description="Disordered" evidence="6">
    <location>
        <begin position="850"/>
        <end position="869"/>
    </location>
</feature>
<feature type="glycosylation site" description="N-linked (GlcNAc...) asparagine" evidence="5">
    <location>
        <position position="149"/>
    </location>
</feature>
<feature type="glycosylation site" description="N-linked (GlcNAc...) asparagine" evidence="5">
    <location>
        <position position="217"/>
    </location>
</feature>
<feature type="glycosylation site" description="N-linked (GlcNAc...) asparagine" evidence="5">
    <location>
        <position position="303"/>
    </location>
</feature>
<feature type="glycosylation site" description="N-linked (GlcNAc...) asparagine" evidence="5">
    <location>
        <position position="327"/>
    </location>
</feature>
<feature type="glycosylation site" description="N-linked (GlcNAc...) asparagine" evidence="5">
    <location>
        <position position="336"/>
    </location>
</feature>
<feature type="glycosylation site" description="N-linked (GlcNAc...) asparagine" evidence="5">
    <location>
        <position position="662"/>
    </location>
</feature>
<feature type="glycosylation site" description="N-linked (GlcNAc...) asparagine" evidence="5">
    <location>
        <position position="725"/>
    </location>
</feature>
<feature type="glycosylation site" description="N-linked (GlcNAc...) asparagine" evidence="5">
    <location>
        <position position="1188"/>
    </location>
</feature>
<feature type="glycosylation site" description="N-linked (GlcNAc...) asparagine" evidence="5">
    <location>
        <position position="1197"/>
    </location>
</feature>
<feature type="glycosylation site" description="N-linked (GlcNAc...) asparagine" evidence="5">
    <location>
        <position position="1203"/>
    </location>
</feature>
<feature type="glycosylation site" description="N-linked (GlcNAc...) asparagine" evidence="5">
    <location>
        <position position="1211"/>
    </location>
</feature>
<feature type="disulfide bond" evidence="2">
    <location>
        <begin position="283"/>
        <end position="320"/>
    </location>
</feature>
<feature type="disulfide bond" evidence="2">
    <location>
        <begin position="765"/>
        <end position="775"/>
    </location>
</feature>
<feature type="mutagenesis site" description="Increased voltage-gated sodium channel activity." evidence="8">
    <original>L</original>
    <variation>P</variation>
    <location>
        <position position="799"/>
    </location>
</feature>
<feature type="sequence conflict" description="In Ref. 2; BAA92154." evidence="11" ref="2">
    <original>A</original>
    <variation>G</variation>
    <location>
        <position position="400"/>
    </location>
</feature>
<feature type="sequence conflict" description="In Ref. 2; BAA92154." evidence="11" ref="2">
    <original>R</original>
    <variation>K</variation>
    <location>
        <position position="427"/>
    </location>
</feature>
<feature type="sequence conflict" description="In Ref. 2; BAA92154." evidence="11" ref="2">
    <original>N</original>
    <variation>K</variation>
    <location>
        <position position="489"/>
    </location>
</feature>
<feature type="sequence conflict" description="In Ref. 2; BAA92154." evidence="11" ref="2">
    <original>W</original>
    <variation>R</variation>
    <location>
        <position position="738"/>
    </location>
</feature>
<feature type="sequence conflict" description="In Ref. 2; BAA92154." evidence="11" ref="2">
    <original>N</original>
    <variation>T</variation>
    <location>
        <position position="761"/>
    </location>
</feature>
<feature type="sequence conflict" description="In Ref. 2; BAA92154." evidence="11" ref="2">
    <original>E</original>
    <variation>D</variation>
    <location>
        <position position="764"/>
    </location>
</feature>
<feature type="sequence conflict" description="In Ref. 2; BAA92154." evidence="11" ref="2">
    <original>C</original>
    <variation>R</variation>
    <location>
        <position position="843"/>
    </location>
</feature>
<feature type="sequence conflict" description="In Ref. 2; BAA92154." evidence="11" ref="2">
    <original>NL</original>
    <variation>IF</variation>
    <location>
        <begin position="1023"/>
        <end position="1024"/>
    </location>
</feature>
<feature type="sequence conflict" description="In Ref. 2; BAA92154." evidence="11" ref="2">
    <original>F</original>
    <variation>L</variation>
    <location>
        <position position="1054"/>
    </location>
</feature>
<feature type="sequence conflict" description="In Ref. 1; AAD53403 and 2; BAA92154." evidence="11" ref="1 2">
    <original>G</original>
    <variation>V</variation>
    <location>
        <position position="1113"/>
    </location>
</feature>
<feature type="sequence conflict" description="In Ref. 2; BAA92154." evidence="11" ref="2">
    <original>Y</original>
    <variation>H</variation>
    <location>
        <position position="1212"/>
    </location>
</feature>
<feature type="sequence conflict" description="In Ref. 2; BAA92154." evidence="11" ref="2">
    <original>K</original>
    <variation>Q</variation>
    <location>
        <position position="1376"/>
    </location>
</feature>
<feature type="sequence conflict" description="In Ref. 2; BAA92154." evidence="11" ref="2">
    <original>N</original>
    <variation>S</variation>
    <location>
        <position position="1496"/>
    </location>
</feature>
<feature type="sequence conflict" description="In Ref. 2; BAA92154." evidence="11" ref="2">
    <original>F</original>
    <variation>L</variation>
    <location>
        <position position="1572"/>
    </location>
</feature>
<evidence type="ECO:0000250" key="1"/>
<evidence type="ECO:0000250" key="2">
    <source>
        <dbReference type="UniProtKB" id="D0E0C2"/>
    </source>
</evidence>
<evidence type="ECO:0000250" key="3">
    <source>
        <dbReference type="UniProtKB" id="Q62968"/>
    </source>
</evidence>
<evidence type="ECO:0000250" key="4">
    <source>
        <dbReference type="UniProtKB" id="Q9UI33"/>
    </source>
</evidence>
<evidence type="ECO:0000255" key="5"/>
<evidence type="ECO:0000256" key="6">
    <source>
        <dbReference type="SAM" id="MobiDB-lite"/>
    </source>
</evidence>
<evidence type="ECO:0000269" key="7">
    <source>
    </source>
</evidence>
<evidence type="ECO:0000269" key="8">
    <source>
    </source>
</evidence>
<evidence type="ECO:0000303" key="9">
    <source>
    </source>
</evidence>
<evidence type="ECO:0000303" key="10">
    <source>
    </source>
</evidence>
<evidence type="ECO:0000305" key="11"/>
<evidence type="ECO:0000312" key="12">
    <source>
        <dbReference type="MGI" id="MGI:1345149"/>
    </source>
</evidence>
<name>SCNBA_MOUSE</name>
<accession>Q9R053</accession>
<accession>E9QM88</accession>
<accession>Q9JMD4</accession>
<gene>
    <name evidence="12" type="primary">Scn11a</name>
    <name evidence="9" type="synonym">Nan</name>
    <name evidence="10" type="synonym">Nat</name>
    <name type="synonym">Sns2</name>
</gene>
<comment type="function">
    <text evidence="4 8">Sodium channel mediating the voltage-dependent sodium ion permeability of excitable membranes. Assuming opened or closed conformations in response to the voltage difference across the membrane, the protein forms a sodium-selective channel through which sodium ions may pass in accordance with their electrochemical gradient (PubMed:24036948). Involved in membrane depolarization during action potential in nociceptors which function as key relay stations for the electrical transmission of pain signals from the periphery to the central nervous system (PubMed:24036948). Also involved in rapid BDNF-evoked neuronal depolarization (By similarity).</text>
</comment>
<comment type="catalytic activity">
    <reaction evidence="8">
        <text>Na(+)(in) = Na(+)(out)</text>
        <dbReference type="Rhea" id="RHEA:34963"/>
        <dbReference type="ChEBI" id="CHEBI:29101"/>
    </reaction>
</comment>
<comment type="subunit">
    <text evidence="3">The voltage-resistant sodium channel consists of an ion conducting pore forming alpha-subunit regulated by one or more auxiliary subunits SCN1B, SCN2B and SCN3B.</text>
</comment>
<comment type="subcellular location">
    <subcellularLocation>
        <location evidence="8">Cell membrane</location>
        <topology evidence="5">Multi-pass membrane protein</topology>
    </subcellularLocation>
</comment>
<comment type="tissue specificity">
    <text evidence="7">Expressed in the dorsal root ganglia (C-fiber neurons), spinal cord, trigeminal ganglia, testis, ovary, uterus and small intestine.</text>
</comment>
<comment type="developmental stage">
    <text evidence="7">Expressed in embryo at 15 dpc onwards.</text>
</comment>
<comment type="domain">
    <text evidence="11">The sequence contains 4 internal repeats, each with 5 hydrophobic segments (S1, S2, S3, S5, S6) and one positively charged segment (S4). Segments S4 are probably the voltage-sensors and are characterized by a series of positively charged amino acids at every third position.</text>
</comment>
<comment type="similarity">
    <text evidence="11">Belongs to the sodium channel (TC 1.A.1.10) family. Nav1.9/SCN11A subfamily.</text>
</comment>
<protein>
    <recommendedName>
        <fullName evidence="11">Sodium channel protein type 11 subunit alpha</fullName>
    </recommendedName>
    <alternativeName>
        <fullName evidence="9">NaN</fullName>
    </alternativeName>
    <alternativeName>
        <fullName>Sensory neuron sodium channel 2</fullName>
    </alternativeName>
    <alternativeName>
        <fullName>Sodium channel protein type XI subunit alpha</fullName>
    </alternativeName>
    <alternativeName>
        <fullName>Voltage-gated sodium channel subunit alpha Nav1.9</fullName>
    </alternativeName>
</protein>
<organism>
    <name type="scientific">Mus musculus</name>
    <name type="common">Mouse</name>
    <dbReference type="NCBI Taxonomy" id="10090"/>
    <lineage>
        <taxon>Eukaryota</taxon>
        <taxon>Metazoa</taxon>
        <taxon>Chordata</taxon>
        <taxon>Craniata</taxon>
        <taxon>Vertebrata</taxon>
        <taxon>Euteleostomi</taxon>
        <taxon>Mammalia</taxon>
        <taxon>Eutheria</taxon>
        <taxon>Euarchontoglires</taxon>
        <taxon>Glires</taxon>
        <taxon>Rodentia</taxon>
        <taxon>Myomorpha</taxon>
        <taxon>Muroidea</taxon>
        <taxon>Muridae</taxon>
        <taxon>Murinae</taxon>
        <taxon>Mus</taxon>
        <taxon>Mus</taxon>
    </lineage>
</organism>